<keyword id="KW-1003">Cell membrane</keyword>
<keyword id="KW-0204">Cytolysis</keyword>
<keyword id="KW-0472">Membrane</keyword>
<keyword id="KW-0812">Transmembrane</keyword>
<keyword id="KW-1133">Transmembrane helix</keyword>
<accession>B7IRX1</accession>
<comment type="function">
    <text evidence="1">Inhibits the expression or activity of extracellular murein hydrolases by interacting, possibly with LrgA, with the holin-like protein CidA. The LrgAB and CidA proteins may affect the proton motive force of the membrane. May be involved in programmed cell death (PCD), possibly triggering PCD in response to antibiotics and environmental stresses.</text>
</comment>
<comment type="subcellular location">
    <subcellularLocation>
        <location evidence="1">Cell membrane</location>
        <topology evidence="1">Multi-pass membrane protein</topology>
    </subcellularLocation>
</comment>
<comment type="similarity">
    <text evidence="1">Belongs to the CidB/LrgB family. LrgB subfamily.</text>
</comment>
<proteinExistence type="inferred from homology"/>
<evidence type="ECO:0000255" key="1">
    <source>
        <dbReference type="HAMAP-Rule" id="MF_01142"/>
    </source>
</evidence>
<dbReference type="EMBL" id="CP001186">
    <property type="protein sequence ID" value="ACK96882.1"/>
    <property type="molecule type" value="Genomic_DNA"/>
</dbReference>
<dbReference type="RefSeq" id="WP_000168869.1">
    <property type="nucleotide sequence ID" value="NC_011772.1"/>
</dbReference>
<dbReference type="GeneID" id="93005687"/>
<dbReference type="KEGG" id="bcg:BCG9842_B5386"/>
<dbReference type="HOGENOM" id="CLU_082099_1_0_9"/>
<dbReference type="Proteomes" id="UP000006744">
    <property type="component" value="Chromosome"/>
</dbReference>
<dbReference type="GO" id="GO:0005886">
    <property type="term" value="C:plasma membrane"/>
    <property type="evidence" value="ECO:0007669"/>
    <property type="project" value="UniProtKB-SubCell"/>
</dbReference>
<dbReference type="GO" id="GO:0019835">
    <property type="term" value="P:cytolysis"/>
    <property type="evidence" value="ECO:0007669"/>
    <property type="project" value="UniProtKB-UniRule"/>
</dbReference>
<dbReference type="GO" id="GO:0031640">
    <property type="term" value="P:killing of cells of another organism"/>
    <property type="evidence" value="ECO:0007669"/>
    <property type="project" value="UniProtKB-KW"/>
</dbReference>
<dbReference type="GO" id="GO:0012501">
    <property type="term" value="P:programmed cell death"/>
    <property type="evidence" value="ECO:0007669"/>
    <property type="project" value="UniProtKB-UniRule"/>
</dbReference>
<dbReference type="HAMAP" id="MF_01142">
    <property type="entry name" value="LrgB"/>
    <property type="match status" value="1"/>
</dbReference>
<dbReference type="InterPro" id="IPR024891">
    <property type="entry name" value="Antiholin-like_LrgB"/>
</dbReference>
<dbReference type="InterPro" id="IPR007300">
    <property type="entry name" value="CidB/LrgB"/>
</dbReference>
<dbReference type="NCBIfam" id="NF003291">
    <property type="entry name" value="PRK04288.1"/>
    <property type="match status" value="1"/>
</dbReference>
<dbReference type="PANTHER" id="PTHR30249:SF0">
    <property type="entry name" value="PLASTIDAL GLYCOLATE_GLYCERATE TRANSLOCATOR 1, CHLOROPLASTIC"/>
    <property type="match status" value="1"/>
</dbReference>
<dbReference type="PANTHER" id="PTHR30249">
    <property type="entry name" value="PUTATIVE SEROTONIN TRANSPORTER"/>
    <property type="match status" value="1"/>
</dbReference>
<dbReference type="Pfam" id="PF04172">
    <property type="entry name" value="LrgB"/>
    <property type="match status" value="1"/>
</dbReference>
<gene>
    <name evidence="1" type="primary">lrgB</name>
    <name type="ordered locus">BCG9842_B5386</name>
</gene>
<protein>
    <recommendedName>
        <fullName evidence="1">Antiholin-like protein LrgB</fullName>
    </recommendedName>
</protein>
<name>LRGB_BACC2</name>
<reference key="1">
    <citation type="submission" date="2008-10" db="EMBL/GenBank/DDBJ databases">
        <title>Genome sequence of Bacillus cereus G9842.</title>
        <authorList>
            <person name="Dodson R.J."/>
            <person name="Durkin A.S."/>
            <person name="Rosovitz M.J."/>
            <person name="Rasko D.A."/>
            <person name="Hoffmaster A."/>
            <person name="Ravel J."/>
            <person name="Sutton G."/>
        </authorList>
    </citation>
    <scope>NUCLEOTIDE SEQUENCE [LARGE SCALE GENOMIC DNA]</scope>
    <source>
        <strain>G9842</strain>
    </source>
</reference>
<organism>
    <name type="scientific">Bacillus cereus (strain G9842)</name>
    <dbReference type="NCBI Taxonomy" id="405531"/>
    <lineage>
        <taxon>Bacteria</taxon>
        <taxon>Bacillati</taxon>
        <taxon>Bacillota</taxon>
        <taxon>Bacilli</taxon>
        <taxon>Bacillales</taxon>
        <taxon>Bacillaceae</taxon>
        <taxon>Bacillus</taxon>
        <taxon>Bacillus cereus group</taxon>
    </lineage>
</organism>
<feature type="chain" id="PRO_1000137349" description="Antiholin-like protein LrgB">
    <location>
        <begin position="1"/>
        <end position="230"/>
    </location>
</feature>
<feature type="transmembrane region" description="Helical" evidence="1">
    <location>
        <begin position="5"/>
        <end position="25"/>
    </location>
</feature>
<feature type="transmembrane region" description="Helical" evidence="1">
    <location>
        <begin position="30"/>
        <end position="50"/>
    </location>
</feature>
<feature type="transmembrane region" description="Helical" evidence="1">
    <location>
        <begin position="61"/>
        <end position="81"/>
    </location>
</feature>
<feature type="transmembrane region" description="Helical" evidence="1">
    <location>
        <begin position="92"/>
        <end position="112"/>
    </location>
</feature>
<feature type="transmembrane region" description="Helical" evidence="1">
    <location>
        <begin position="149"/>
        <end position="169"/>
    </location>
</feature>
<feature type="transmembrane region" description="Helical" evidence="1">
    <location>
        <begin position="177"/>
        <end position="197"/>
    </location>
</feature>
<feature type="transmembrane region" description="Helical" evidence="1">
    <location>
        <begin position="209"/>
        <end position="229"/>
    </location>
</feature>
<sequence>MASTMTPYFGIVVSLIAYGIGTLLFKHSKGFFLFTPLFVAMVLGIVFLKVGNFTFEEYNTGGKMISFFLEPATIAFAIPLYKQVDKLKKYWWQILSAIVVGSICSVIVVFIVAKAIGLDTAVMNSMLPQAATTAIALPISESIGGIPAITSFAVIFNAVIVYALGALFLKTFRVKHPIAKGLALGTAGHALGVAVGIEMGEVEAAMASIAVTVVGVVTVVVIPMFMPFIG</sequence>